<organism>
    <name type="scientific">Arabidopsis thaliana</name>
    <name type="common">Mouse-ear cress</name>
    <dbReference type="NCBI Taxonomy" id="3702"/>
    <lineage>
        <taxon>Eukaryota</taxon>
        <taxon>Viridiplantae</taxon>
        <taxon>Streptophyta</taxon>
        <taxon>Embryophyta</taxon>
        <taxon>Tracheophyta</taxon>
        <taxon>Spermatophyta</taxon>
        <taxon>Magnoliopsida</taxon>
        <taxon>eudicotyledons</taxon>
        <taxon>Gunneridae</taxon>
        <taxon>Pentapetalae</taxon>
        <taxon>rosids</taxon>
        <taxon>malvids</taxon>
        <taxon>Brassicales</taxon>
        <taxon>Brassicaceae</taxon>
        <taxon>Camelineae</taxon>
        <taxon>Arabidopsis</taxon>
    </lineage>
</organism>
<feature type="chain" id="PRO_0000196830" description="Uncharacterized mitochondrial protein AtMg01400">
    <location>
        <begin position="1"/>
        <end position="105"/>
    </location>
</feature>
<feature type="region of interest" description="Disordered" evidence="1">
    <location>
        <begin position="58"/>
        <end position="105"/>
    </location>
</feature>
<feature type="compositionally biased region" description="Polar residues" evidence="1">
    <location>
        <begin position="71"/>
        <end position="82"/>
    </location>
</feature>
<feature type="compositionally biased region" description="Polar residues" evidence="1">
    <location>
        <begin position="91"/>
        <end position="105"/>
    </location>
</feature>
<sequence>MKYHFSSMEPWWKREFSFCIPAIYIKMASISLFQNSWLKMKHLPSCLFTQTTNTLGIYRKKKPNHSRDNPRINSNLSTNYAQAKSVERSRSNSLNSGPNPLENAT</sequence>
<name>M1400_ARATH</name>
<proteinExistence type="predicted"/>
<geneLocation type="mitochondrion"/>
<accession>P92566</accession>
<accession>Q1ZXV2</accession>
<keyword id="KW-0496">Mitochondrion</keyword>
<keyword id="KW-1185">Reference proteome</keyword>
<dbReference type="EMBL" id="Y08501">
    <property type="protein sequence ID" value="CAA69787.1"/>
    <property type="molecule type" value="Genomic_DNA"/>
</dbReference>
<dbReference type="EMBL" id="BK010421">
    <property type="status" value="NOT_ANNOTATED_CDS"/>
    <property type="molecule type" value="Genomic_DNA"/>
</dbReference>
<dbReference type="RefSeq" id="NP_085589.1">
    <property type="nucleotide sequence ID" value="NC_001284.2"/>
</dbReference>
<dbReference type="STRING" id="3702.P92566"/>
<dbReference type="PaxDb" id="3702-ATMG01400.1"/>
<dbReference type="EnsemblPlants" id="ATMG01400.1">
    <property type="protein sequence ID" value="ATMG01400.1"/>
    <property type="gene ID" value="ATMG01400"/>
</dbReference>
<dbReference type="Gramene" id="ATMG01400.1">
    <property type="protein sequence ID" value="ATMG01400.1"/>
    <property type="gene ID" value="ATMG01400"/>
</dbReference>
<dbReference type="Araport" id="ATMG01400"/>
<dbReference type="TAIR" id="ATMG01400">
    <property type="gene designation" value="ORF105B"/>
</dbReference>
<dbReference type="HOGENOM" id="CLU_2240313_0_0_1"/>
<dbReference type="InParanoid" id="P92566"/>
<dbReference type="PRO" id="PR:P92566"/>
<dbReference type="Proteomes" id="UP000006548">
    <property type="component" value="Mitochondrion MT"/>
</dbReference>
<dbReference type="GO" id="GO:0005739">
    <property type="term" value="C:mitochondrion"/>
    <property type="evidence" value="ECO:0007669"/>
    <property type="project" value="UniProtKB-SubCell"/>
</dbReference>
<protein>
    <recommendedName>
        <fullName>Uncharacterized mitochondrial protein AtMg01400</fullName>
    </recommendedName>
    <alternativeName>
        <fullName>ORF105b</fullName>
    </alternativeName>
</protein>
<evidence type="ECO:0000256" key="1">
    <source>
        <dbReference type="SAM" id="MobiDB-lite"/>
    </source>
</evidence>
<evidence type="ECO:0000305" key="2"/>
<comment type="subcellular location">
    <subcellularLocation>
        <location evidence="2">Mitochondrion</location>
    </subcellularLocation>
</comment>
<gene>
    <name type="ordered locus">AtMg01400</name>
</gene>
<reference key="1">
    <citation type="journal article" date="1997" name="Nat. Genet.">
        <title>The mitochondrial genome of Arabidopsis thaliana contains 57 genes in 366,924 nucleotides.</title>
        <authorList>
            <person name="Unseld M."/>
            <person name="Marienfeld J.R."/>
            <person name="Brandt P."/>
            <person name="Brennicke A."/>
        </authorList>
    </citation>
    <scope>NUCLEOTIDE SEQUENCE [LARGE SCALE GENOMIC DNA]</scope>
    <source>
        <strain>cv. C24</strain>
    </source>
</reference>
<reference key="2">
    <citation type="journal article" date="2018" name="Plant Cell">
        <title>Correction of persistent errors in Arabidopsis reference mitochondrial genomes.</title>
        <authorList>
            <person name="Sloan D.B."/>
            <person name="Wu Z."/>
            <person name="Sharbrough J."/>
        </authorList>
    </citation>
    <scope>NUCLEOTIDE SEQUENCE [LARGE SCALE GENOMIC DNA]</scope>
    <source>
        <strain>cv. Columbia</strain>
    </source>
</reference>